<comment type="function">
    <text evidence="1 2">Has a role in meiotic nuclear divsion where it promotes the movement of 'horsetails'.</text>
</comment>
<comment type="subcellular location">
    <subcellularLocation>
        <location evidence="3">Cytoplasm</location>
    </subcellularLocation>
</comment>
<comment type="similarity">
    <text evidence="4">Belongs to the dynein intermediate chain family.</text>
</comment>
<gene>
    <name type="primary">dic1</name>
    <name type="synonym">mug44</name>
    <name type="ORF">SPBC646.17c</name>
    <name type="ORF">SPBC855.01c</name>
    <name type="ORF">SPBP35G2.01c</name>
</gene>
<accession>O94518</accession>
<protein>
    <recommendedName>
        <fullName>Dynein intermediate chain 1</fullName>
    </recommendedName>
    <alternativeName>
        <fullName>Meiotically up-regulated gene 44 protein</fullName>
    </alternativeName>
</protein>
<organism>
    <name type="scientific">Schizosaccharomyces pombe (strain 972 / ATCC 24843)</name>
    <name type="common">Fission yeast</name>
    <dbReference type="NCBI Taxonomy" id="284812"/>
    <lineage>
        <taxon>Eukaryota</taxon>
        <taxon>Fungi</taxon>
        <taxon>Dikarya</taxon>
        <taxon>Ascomycota</taxon>
        <taxon>Taphrinomycotina</taxon>
        <taxon>Schizosaccharomycetes</taxon>
        <taxon>Schizosaccharomycetales</taxon>
        <taxon>Schizosaccharomycetaceae</taxon>
        <taxon>Schizosaccharomyces</taxon>
    </lineage>
</organism>
<evidence type="ECO:0000269" key="1">
    <source>
    </source>
</evidence>
<evidence type="ECO:0000269" key="2">
    <source>
    </source>
</evidence>
<evidence type="ECO:0000269" key="3">
    <source>
    </source>
</evidence>
<evidence type="ECO:0000305" key="4"/>
<feature type="chain" id="PRO_0000297693" description="Dynein intermediate chain 1">
    <location>
        <begin position="1"/>
        <end position="544"/>
    </location>
</feature>
<feature type="repeat" description="WD 1">
    <location>
        <begin position="241"/>
        <end position="281"/>
    </location>
</feature>
<feature type="repeat" description="WD 2">
    <location>
        <begin position="289"/>
        <end position="330"/>
    </location>
</feature>
<feature type="repeat" description="WD 3">
    <location>
        <begin position="342"/>
        <end position="387"/>
    </location>
</feature>
<feature type="repeat" description="WD 4">
    <location>
        <begin position="402"/>
        <end position="441"/>
    </location>
</feature>
<feature type="repeat" description="WD 5">
    <location>
        <begin position="461"/>
        <end position="501"/>
    </location>
</feature>
<feature type="repeat" description="WD 6">
    <location>
        <begin position="506"/>
        <end position="544"/>
    </location>
</feature>
<name>DIC1_SCHPO</name>
<reference key="1">
    <citation type="journal article" date="2002" name="Nature">
        <title>The genome sequence of Schizosaccharomyces pombe.</title>
        <authorList>
            <person name="Wood V."/>
            <person name="Gwilliam R."/>
            <person name="Rajandream M.A."/>
            <person name="Lyne M.H."/>
            <person name="Lyne R."/>
            <person name="Stewart A."/>
            <person name="Sgouros J.G."/>
            <person name="Peat N."/>
            <person name="Hayles J."/>
            <person name="Baker S.G."/>
            <person name="Basham D."/>
            <person name="Bowman S."/>
            <person name="Brooks K."/>
            <person name="Brown D."/>
            <person name="Brown S."/>
            <person name="Chillingworth T."/>
            <person name="Churcher C.M."/>
            <person name="Collins M."/>
            <person name="Connor R."/>
            <person name="Cronin A."/>
            <person name="Davis P."/>
            <person name="Feltwell T."/>
            <person name="Fraser A."/>
            <person name="Gentles S."/>
            <person name="Goble A."/>
            <person name="Hamlin N."/>
            <person name="Harris D.E."/>
            <person name="Hidalgo J."/>
            <person name="Hodgson G."/>
            <person name="Holroyd S."/>
            <person name="Hornsby T."/>
            <person name="Howarth S."/>
            <person name="Huckle E.J."/>
            <person name="Hunt S."/>
            <person name="Jagels K."/>
            <person name="James K.D."/>
            <person name="Jones L."/>
            <person name="Jones M."/>
            <person name="Leather S."/>
            <person name="McDonald S."/>
            <person name="McLean J."/>
            <person name="Mooney P."/>
            <person name="Moule S."/>
            <person name="Mungall K.L."/>
            <person name="Murphy L.D."/>
            <person name="Niblett D."/>
            <person name="Odell C."/>
            <person name="Oliver K."/>
            <person name="O'Neil S."/>
            <person name="Pearson D."/>
            <person name="Quail M.A."/>
            <person name="Rabbinowitsch E."/>
            <person name="Rutherford K.M."/>
            <person name="Rutter S."/>
            <person name="Saunders D."/>
            <person name="Seeger K."/>
            <person name="Sharp S."/>
            <person name="Skelton J."/>
            <person name="Simmonds M.N."/>
            <person name="Squares R."/>
            <person name="Squares S."/>
            <person name="Stevens K."/>
            <person name="Taylor K."/>
            <person name="Taylor R.G."/>
            <person name="Tivey A."/>
            <person name="Walsh S.V."/>
            <person name="Warren T."/>
            <person name="Whitehead S."/>
            <person name="Woodward J.R."/>
            <person name="Volckaert G."/>
            <person name="Aert R."/>
            <person name="Robben J."/>
            <person name="Grymonprez B."/>
            <person name="Weltjens I."/>
            <person name="Vanstreels E."/>
            <person name="Rieger M."/>
            <person name="Schaefer M."/>
            <person name="Mueller-Auer S."/>
            <person name="Gabel C."/>
            <person name="Fuchs M."/>
            <person name="Duesterhoeft A."/>
            <person name="Fritzc C."/>
            <person name="Holzer E."/>
            <person name="Moestl D."/>
            <person name="Hilbert H."/>
            <person name="Borzym K."/>
            <person name="Langer I."/>
            <person name="Beck A."/>
            <person name="Lehrach H."/>
            <person name="Reinhardt R."/>
            <person name="Pohl T.M."/>
            <person name="Eger P."/>
            <person name="Zimmermann W."/>
            <person name="Wedler H."/>
            <person name="Wambutt R."/>
            <person name="Purnelle B."/>
            <person name="Goffeau A."/>
            <person name="Cadieu E."/>
            <person name="Dreano S."/>
            <person name="Gloux S."/>
            <person name="Lelaure V."/>
            <person name="Mottier S."/>
            <person name="Galibert F."/>
            <person name="Aves S.J."/>
            <person name="Xiang Z."/>
            <person name="Hunt C."/>
            <person name="Moore K."/>
            <person name="Hurst S.M."/>
            <person name="Lucas M."/>
            <person name="Rochet M."/>
            <person name="Gaillardin C."/>
            <person name="Tallada V.A."/>
            <person name="Garzon A."/>
            <person name="Thode G."/>
            <person name="Daga R.R."/>
            <person name="Cruzado L."/>
            <person name="Jimenez J."/>
            <person name="Sanchez M."/>
            <person name="del Rey F."/>
            <person name="Benito J."/>
            <person name="Dominguez A."/>
            <person name="Revuelta J.L."/>
            <person name="Moreno S."/>
            <person name="Armstrong J."/>
            <person name="Forsburg S.L."/>
            <person name="Cerutti L."/>
            <person name="Lowe T."/>
            <person name="McCombie W.R."/>
            <person name="Paulsen I."/>
            <person name="Potashkin J."/>
            <person name="Shpakovski G.V."/>
            <person name="Ussery D."/>
            <person name="Barrell B.G."/>
            <person name="Nurse P."/>
        </authorList>
    </citation>
    <scope>NUCLEOTIDE SEQUENCE [LARGE SCALE GENOMIC DNA]</scope>
    <source>
        <strain>972 / ATCC 24843</strain>
    </source>
</reference>
<reference key="2">
    <citation type="journal article" date="2004" name="J. Cell Sci.">
        <title>The p150-Glued Ssm4p regulates microtubular dynamics and nuclear movement in fission yeast.</title>
        <authorList>
            <person name="Niccoli T."/>
            <person name="Yamashita A."/>
            <person name="Nurse P."/>
            <person name="Yamamoto M."/>
        </authorList>
    </citation>
    <scope>FUNCTION</scope>
</reference>
<reference key="3">
    <citation type="journal article" date="2005" name="Curr. Biol.">
        <title>A large-scale screen in S. pombe identifies seven novel genes required for critical meiotic events.</title>
        <authorList>
            <person name="Martin-Castellanos C."/>
            <person name="Blanco M."/>
            <person name="Rozalen A.E."/>
            <person name="Perez-Hidalgo L."/>
            <person name="Garcia A.I."/>
            <person name="Conde F."/>
            <person name="Mata J."/>
            <person name="Ellermeier C."/>
            <person name="Davis L."/>
            <person name="San-Segundo P."/>
            <person name="Smith G.R."/>
            <person name="Moreno S."/>
        </authorList>
    </citation>
    <scope>FUNCTION IN MEIOSIS</scope>
</reference>
<reference key="4">
    <citation type="journal article" date="2006" name="Nat. Biotechnol.">
        <title>ORFeome cloning and global analysis of protein localization in the fission yeast Schizosaccharomyces pombe.</title>
        <authorList>
            <person name="Matsuyama A."/>
            <person name="Arai R."/>
            <person name="Yashiroda Y."/>
            <person name="Shirai A."/>
            <person name="Kamata A."/>
            <person name="Sekido S."/>
            <person name="Kobayashi Y."/>
            <person name="Hashimoto A."/>
            <person name="Hamamoto M."/>
            <person name="Hiraoka Y."/>
            <person name="Horinouchi S."/>
            <person name="Yoshida M."/>
        </authorList>
    </citation>
    <scope>SUBCELLULAR LOCATION [LARGE SCALE ANALYSIS]</scope>
</reference>
<keyword id="KW-0963">Cytoplasm</keyword>
<keyword id="KW-0469">Meiosis</keyword>
<keyword id="KW-1185">Reference proteome</keyword>
<keyword id="KW-0677">Repeat</keyword>
<keyword id="KW-0853">WD repeat</keyword>
<dbReference type="EMBL" id="CU329671">
    <property type="protein sequence ID" value="CAA22821.2"/>
    <property type="molecule type" value="Genomic_DNA"/>
</dbReference>
<dbReference type="PIR" id="T40593">
    <property type="entry name" value="T40593"/>
</dbReference>
<dbReference type="RefSeq" id="XP_001713125.1">
    <property type="nucleotide sequence ID" value="XM_001713073.2"/>
</dbReference>
<dbReference type="SMR" id="O94518"/>
<dbReference type="BioGRID" id="857895">
    <property type="interactions" value="1"/>
</dbReference>
<dbReference type="FunCoup" id="O94518">
    <property type="interactions" value="106"/>
</dbReference>
<dbReference type="STRING" id="284812.O94518"/>
<dbReference type="PaxDb" id="4896-SPBC646.17c.1"/>
<dbReference type="EnsemblFungi" id="SPBC646.17c.1">
    <property type="protein sequence ID" value="SPBC646.17c.1:pep"/>
    <property type="gene ID" value="SPBC646.17c"/>
</dbReference>
<dbReference type="PomBase" id="SPBC646.17c">
    <property type="gene designation" value="dic1"/>
</dbReference>
<dbReference type="VEuPathDB" id="FungiDB:SPBC646.17c"/>
<dbReference type="eggNOG" id="KOG1587">
    <property type="taxonomic scope" value="Eukaryota"/>
</dbReference>
<dbReference type="HOGENOM" id="CLU_500736_0_0_1"/>
<dbReference type="InParanoid" id="O94518"/>
<dbReference type="OMA" id="CTCMSFA"/>
<dbReference type="PhylomeDB" id="O94518"/>
<dbReference type="PRO" id="PR:O94518"/>
<dbReference type="Proteomes" id="UP000002485">
    <property type="component" value="Chromosome II"/>
</dbReference>
<dbReference type="GO" id="GO:0030981">
    <property type="term" value="C:cortical microtubule cytoskeleton"/>
    <property type="evidence" value="ECO:0000314"/>
    <property type="project" value="PomBase"/>
</dbReference>
<dbReference type="GO" id="GO:0005868">
    <property type="term" value="C:cytoplasmic dynein complex"/>
    <property type="evidence" value="ECO:0000318"/>
    <property type="project" value="GO_Central"/>
</dbReference>
<dbReference type="GO" id="GO:0005829">
    <property type="term" value="C:cytosol"/>
    <property type="evidence" value="ECO:0007005"/>
    <property type="project" value="PomBase"/>
</dbReference>
<dbReference type="GO" id="GO:0035974">
    <property type="term" value="C:meiotic spindle pole body"/>
    <property type="evidence" value="ECO:0000314"/>
    <property type="project" value="PomBase"/>
</dbReference>
<dbReference type="GO" id="GO:0016887">
    <property type="term" value="F:ATP hydrolysis activity"/>
    <property type="evidence" value="ECO:0000305"/>
    <property type="project" value="PomBase"/>
</dbReference>
<dbReference type="GO" id="GO:0045504">
    <property type="term" value="F:dynein heavy chain binding"/>
    <property type="evidence" value="ECO:0000318"/>
    <property type="project" value="GO_Central"/>
</dbReference>
<dbReference type="GO" id="GO:0045503">
    <property type="term" value="F:dynein light chain binding"/>
    <property type="evidence" value="ECO:0000318"/>
    <property type="project" value="GO_Central"/>
</dbReference>
<dbReference type="GO" id="GO:0030989">
    <property type="term" value="P:dynein-driven meiotic oscillatory nuclear movement"/>
    <property type="evidence" value="ECO:0000315"/>
    <property type="project" value="PomBase"/>
</dbReference>
<dbReference type="GO" id="GO:0010970">
    <property type="term" value="P:transport along microtubule"/>
    <property type="evidence" value="ECO:0000318"/>
    <property type="project" value="GO_Central"/>
</dbReference>
<dbReference type="FunFam" id="2.130.10.10:FF:000745">
    <property type="entry name" value="Dynein, putative"/>
    <property type="match status" value="1"/>
</dbReference>
<dbReference type="Gene3D" id="2.130.10.10">
    <property type="entry name" value="YVTN repeat-like/Quinoprotein amine dehydrogenase"/>
    <property type="match status" value="2"/>
</dbReference>
<dbReference type="InterPro" id="IPR050687">
    <property type="entry name" value="Dynein_IC"/>
</dbReference>
<dbReference type="InterPro" id="IPR015943">
    <property type="entry name" value="WD40/YVTN_repeat-like_dom_sf"/>
</dbReference>
<dbReference type="InterPro" id="IPR036322">
    <property type="entry name" value="WD40_repeat_dom_sf"/>
</dbReference>
<dbReference type="InterPro" id="IPR001680">
    <property type="entry name" value="WD40_rpt"/>
</dbReference>
<dbReference type="PANTHER" id="PTHR12442:SF22">
    <property type="entry name" value="CYTOPLASMIC DYNEIN 1 INTERMEDIATE CHAIN-RELATED"/>
    <property type="match status" value="1"/>
</dbReference>
<dbReference type="PANTHER" id="PTHR12442">
    <property type="entry name" value="DYNEIN INTERMEDIATE CHAIN"/>
    <property type="match status" value="1"/>
</dbReference>
<dbReference type="Pfam" id="PF00400">
    <property type="entry name" value="WD40"/>
    <property type="match status" value="1"/>
</dbReference>
<dbReference type="SMART" id="SM00320">
    <property type="entry name" value="WD40"/>
    <property type="match status" value="5"/>
</dbReference>
<dbReference type="SUPFAM" id="SSF50978">
    <property type="entry name" value="WD40 repeat-like"/>
    <property type="match status" value="1"/>
</dbReference>
<dbReference type="PROSITE" id="PS00678">
    <property type="entry name" value="WD_REPEATS_1"/>
    <property type="match status" value="1"/>
</dbReference>
<dbReference type="PROSITE" id="PS50082">
    <property type="entry name" value="WD_REPEATS_2"/>
    <property type="match status" value="1"/>
</dbReference>
<dbReference type="PROSITE" id="PS50294">
    <property type="entry name" value="WD_REPEATS_REGION"/>
    <property type="match status" value="1"/>
</dbReference>
<proteinExistence type="evidence at protein level"/>
<sequence length="544" mass="60961">MDKNIKREIEIKRAKLLLLKNKENCTDAVSSSNKEGPKQISEDQLSNFLCKILKPTNLTPQTYSLESKSSNLVSDCELKISSVYQSYSSTFNVSNHVPSISKTVNIRETSKHLKHSTKAPKCSLPTSALEIDHLNNFLHSSAKILDRALCDQSNQLFTDYTVKKKSKKNKSQLEENGLNHLFTFQDEKITLNSVVNSISYSSFFEELLITSYAKPKEALRTRGLAIVWNQRWKNSPESVLKARSEITVCKPSPFHPQLIAGGAYNGQVFLWDLRQGQYPVSFTTIISGGHLEPVTDITYINNPPSNNIVTCSTDGLVHIWEPDMFSRPSETICLSSQVDSSSQCIPATCLSFIPENNMEFLVGAEDGKLQRGYRSDYSETKAVQPSNVSYEGHNVFISGIDVMTSNSQNVFLEKNKDFALTSSFDWTVRLWQCSPSRNQHELVPSNDLDEQVIINSCKTFTHKAMVFDVKWCVSEPCCFASVDALGNLNLWDLQKDVEAPVTSDIPDGKPLNKIAWQPEKRNLACGGLNGNVHIYKHLSPNLAN</sequence>